<evidence type="ECO:0000250" key="1"/>
<evidence type="ECO:0000255" key="2"/>
<evidence type="ECO:0000305" key="3"/>
<sequence>MKIIFVFALLAIAACSATAQFDVLGQNIRQYQVQSPLLLQQQVLSPYNEFVRQQYSIAASTFLQSAAFQLRNNQVLQQLRLVAQQSHYQDINVVQAIAHQLHLQQFGNLYIDRNLAQAQALLAFNLPSTYGIYPWSYSAPDSITTLGGVLY</sequence>
<gene>
    <name type="primary">PROLM20</name>
    <name type="ordered locus">Os07g0219300</name>
    <name type="ordered locus">LOC_Os07g11910</name>
    <name type="ORF">B1130E10.109</name>
    <name type="ORF">OSJNBa0031C24.133</name>
</gene>
<protein>
    <recommendedName>
        <fullName>Prolamin PPROL 14P</fullName>
    </recommendedName>
</protein>
<organism>
    <name type="scientific">Oryza sativa subsp. japonica</name>
    <name type="common">Rice</name>
    <dbReference type="NCBI Taxonomy" id="39947"/>
    <lineage>
        <taxon>Eukaryota</taxon>
        <taxon>Viridiplantae</taxon>
        <taxon>Streptophyta</taxon>
        <taxon>Embryophyta</taxon>
        <taxon>Tracheophyta</taxon>
        <taxon>Spermatophyta</taxon>
        <taxon>Magnoliopsida</taxon>
        <taxon>Liliopsida</taxon>
        <taxon>Poales</taxon>
        <taxon>Poaceae</taxon>
        <taxon>BOP clade</taxon>
        <taxon>Oryzoideae</taxon>
        <taxon>Oryzeae</taxon>
        <taxon>Oryzinae</taxon>
        <taxon>Oryza</taxon>
        <taxon>Oryza sativa</taxon>
    </lineage>
</organism>
<accession>Q42465</accession>
<accession>B7F9P8</accession>
<accession>Q7DMS4</accession>
<accession>Q8GVK8</accession>
<reference key="1">
    <citation type="journal article" date="1992" name="Biosci. Biotechnol. Biochem.">
        <title>Nucleotide sequence of a cDNA that encodes a rice prolamin.</title>
        <authorList>
            <person name="Yamagata H."/>
            <person name="Nomura T."/>
            <person name="Arai S."/>
            <person name="Tanaka K."/>
            <person name="Iwasaki T."/>
        </authorList>
    </citation>
    <scope>NUCLEOTIDE SEQUENCE [MRNA]</scope>
    <source>
        <tissue>Seed</tissue>
    </source>
</reference>
<reference key="2">
    <citation type="journal article" date="2005" name="Nature">
        <title>The map-based sequence of the rice genome.</title>
        <authorList>
            <consortium name="International rice genome sequencing project (IRGSP)"/>
        </authorList>
    </citation>
    <scope>NUCLEOTIDE SEQUENCE [LARGE SCALE GENOMIC DNA]</scope>
    <source>
        <strain>cv. Nipponbare</strain>
    </source>
</reference>
<reference key="3">
    <citation type="journal article" date="2008" name="Nucleic Acids Res.">
        <title>The rice annotation project database (RAP-DB): 2008 update.</title>
        <authorList>
            <consortium name="The rice annotation project (RAP)"/>
        </authorList>
    </citation>
    <scope>GENOME REANNOTATION</scope>
    <source>
        <strain>cv. Nipponbare</strain>
    </source>
</reference>
<reference key="4">
    <citation type="journal article" date="2013" name="Rice">
        <title>Improvement of the Oryza sativa Nipponbare reference genome using next generation sequence and optical map data.</title>
        <authorList>
            <person name="Kawahara Y."/>
            <person name="de la Bastide M."/>
            <person name="Hamilton J.P."/>
            <person name="Kanamori H."/>
            <person name="McCombie W.R."/>
            <person name="Ouyang S."/>
            <person name="Schwartz D.C."/>
            <person name="Tanaka T."/>
            <person name="Wu J."/>
            <person name="Zhou S."/>
            <person name="Childs K.L."/>
            <person name="Davidson R.M."/>
            <person name="Lin H."/>
            <person name="Quesada-Ocampo L."/>
            <person name="Vaillancourt B."/>
            <person name="Sakai H."/>
            <person name="Lee S.S."/>
            <person name="Kim J."/>
            <person name="Numa H."/>
            <person name="Itoh T."/>
            <person name="Buell C.R."/>
            <person name="Matsumoto T."/>
        </authorList>
    </citation>
    <scope>GENOME REANNOTATION</scope>
    <source>
        <strain>cv. Nipponbare</strain>
    </source>
</reference>
<reference key="5">
    <citation type="submission" date="2006-10" db="EMBL/GenBank/DDBJ databases">
        <title>Oryza sativa full length cDNA.</title>
        <authorList>
            <consortium name="The rice full-length cDNA consortium"/>
        </authorList>
    </citation>
    <scope>NUCLEOTIDE SEQUENCE [LARGE SCALE MRNA]</scope>
    <source>
        <strain>cv. Nipponbare</strain>
    </source>
</reference>
<reference key="6">
    <citation type="journal article" date="2007" name="Plant J.">
        <title>Small cysteine-rich peptides resembling antimicrobial peptides have been under-predicted in plants.</title>
        <authorList>
            <person name="Silverstein K.A.T."/>
            <person name="Moskal W.A. Jr."/>
            <person name="Wu H.C."/>
            <person name="Underwood B.A."/>
            <person name="Graham M.A."/>
            <person name="Town C.D."/>
            <person name="VandenBosch K.A."/>
        </authorList>
    </citation>
    <scope>GENE FAMILY</scope>
    <scope>NOMENCLATURE</scope>
</reference>
<feature type="signal peptide" evidence="2">
    <location>
        <begin position="1"/>
        <end position="19"/>
    </location>
</feature>
<feature type="chain" id="PRO_5000139504" description="Prolamin PPROL 14P">
    <location>
        <begin position="20"/>
        <end position="151"/>
    </location>
</feature>
<feature type="modified residue" description="Pyrrolidone carboxylic acid" evidence="2">
    <location>
        <position position="20"/>
    </location>
</feature>
<comment type="function">
    <text evidence="1">Seed storage protein; serves as a source of nitrogen, carbon and sulfur for the young developing seedling.</text>
</comment>
<comment type="subcellular location">
    <subcellularLocation>
        <location>Vacuole</location>
        <location>Aleurone grain</location>
    </subcellularLocation>
    <text evidence="1">In rice, prolamin accumulates as a type I protein body which originates directly from the endoplasmic reticulum.</text>
</comment>
<comment type="similarity">
    <text evidence="3">Belongs to the prolamin family.</text>
</comment>
<dbReference type="EMBL" id="D11385">
    <property type="protein sequence ID" value="BAA01981.1"/>
    <property type="molecule type" value="mRNA"/>
</dbReference>
<dbReference type="EMBL" id="S39468">
    <property type="protein sequence ID" value="AAC04378.1"/>
    <property type="molecule type" value="Unassigned_RNA"/>
</dbReference>
<dbReference type="EMBL" id="AP005160">
    <property type="protein sequence ID" value="BAC20110.1"/>
    <property type="molecule type" value="Genomic_DNA"/>
</dbReference>
<dbReference type="EMBL" id="AP005719">
    <property type="protein sequence ID" value="BAD31663.1"/>
    <property type="molecule type" value="Genomic_DNA"/>
</dbReference>
<dbReference type="EMBL" id="AP008213">
    <property type="protein sequence ID" value="BAF21111.1"/>
    <property type="molecule type" value="Genomic_DNA"/>
</dbReference>
<dbReference type="EMBL" id="AP014963">
    <property type="protein sequence ID" value="BAT00643.1"/>
    <property type="molecule type" value="Genomic_DNA"/>
</dbReference>
<dbReference type="EMBL" id="AK242799">
    <property type="protein sequence ID" value="BAH01346.1"/>
    <property type="molecule type" value="mRNA"/>
</dbReference>
<dbReference type="PIR" id="JS0672">
    <property type="entry name" value="JS0672"/>
</dbReference>
<dbReference type="FunCoup" id="Q42465">
    <property type="interactions" value="22"/>
</dbReference>
<dbReference type="PaxDb" id="39947-Q42465"/>
<dbReference type="EnsemblPlants" id="Os07t0219300-01">
    <property type="protein sequence ID" value="Os07t0219300-01"/>
    <property type="gene ID" value="Os07g0219300"/>
</dbReference>
<dbReference type="Gramene" id="Os07t0219300-01">
    <property type="protein sequence ID" value="Os07t0219300-01"/>
    <property type="gene ID" value="Os07g0219300"/>
</dbReference>
<dbReference type="KEGG" id="dosa:Os07g0219300"/>
<dbReference type="HOGENOM" id="CLU_081977_1_1_1"/>
<dbReference type="InParanoid" id="Q42465"/>
<dbReference type="Proteomes" id="UP000000763">
    <property type="component" value="Chromosome 7"/>
</dbReference>
<dbReference type="Proteomes" id="UP000059680">
    <property type="component" value="Chromosome 7"/>
</dbReference>
<dbReference type="GO" id="GO:0033095">
    <property type="term" value="C:aleurone grain"/>
    <property type="evidence" value="ECO:0007669"/>
    <property type="project" value="UniProtKB-SubCell"/>
</dbReference>
<dbReference type="GO" id="GO:0005773">
    <property type="term" value="C:vacuole"/>
    <property type="evidence" value="ECO:0007669"/>
    <property type="project" value="UniProtKB-KW"/>
</dbReference>
<dbReference type="GO" id="GO:0045735">
    <property type="term" value="F:nutrient reservoir activity"/>
    <property type="evidence" value="ECO:0007669"/>
    <property type="project" value="UniProtKB-KW"/>
</dbReference>
<dbReference type="InterPro" id="IPR036312">
    <property type="entry name" value="Bifun_inhib/LTP/seed_sf"/>
</dbReference>
<dbReference type="InterPro" id="IPR016140">
    <property type="entry name" value="Bifunc_inhib/LTP/seed_store"/>
</dbReference>
<dbReference type="InterPro" id="IPR001954">
    <property type="entry name" value="Glia_glutenin"/>
</dbReference>
<dbReference type="PANTHER" id="PTHR33454">
    <property type="entry name" value="PROLAMIN PPROL 14P"/>
    <property type="match status" value="1"/>
</dbReference>
<dbReference type="PANTHER" id="PTHR33454:SF19">
    <property type="entry name" value="PROLAMIN PPROL 14P"/>
    <property type="match status" value="1"/>
</dbReference>
<dbReference type="Pfam" id="PF13016">
    <property type="entry name" value="Gliadin"/>
    <property type="match status" value="1"/>
</dbReference>
<dbReference type="SUPFAM" id="SSF47699">
    <property type="entry name" value="Bifunctional inhibitor/lipid-transfer protein/seed storage 2S albumin"/>
    <property type="match status" value="1"/>
</dbReference>
<keyword id="KW-0873">Pyrrolidone carboxylic acid</keyword>
<keyword id="KW-1185">Reference proteome</keyword>
<keyword id="KW-0708">Seed storage protein</keyword>
<keyword id="KW-0732">Signal</keyword>
<keyword id="KW-0758">Storage protein</keyword>
<keyword id="KW-0926">Vacuole</keyword>
<name>PRO20_ORYSJ</name>
<proteinExistence type="evidence at transcript level"/>